<sequence>MVTSLNEDNESVTVEWIENGDTKGKEIDLESIFSLNPDLVPDEDIEPSPETPPPPTSSAKVNKIVKNRRTVASIKNEPPPRDNRVVGSARARPSQLPEQSSSAQQNARRKSNCVKEVEKLQEKREKRRLQQQELREKRAQDVDATNPNYEIMCMIRDFRGSLDYRPLTTADPIDEHRICVCVRKRPLNKKETQMKDLDVITIPSKDVVMVHEPKQKVDLTRYLENQTFRFDYAFDDSAPNEMVYRFTARPLVETIFERGMATCFAYGQTGSGKTHTMGGDFSGKNQDCSKGIYALAARDVFLMLKKPNYKKLELQVNATFFEIYSGKVFDLLNRKTKLRVLEDGKQQVQVVGLQEREVKCVEDVLKLIDIGNSCRTSGQTSANAHSSRSHAVFQIILRRKGKLHGKFSLIDLAGNERGADTSSADRQTRLEGAEINKSLLAHKECIRALGRNKPHTPFRASKLTQVLRDSFIGENSRTCMIATISPGMASCENTLNTLRYANRVKELTVDPTAAGDVRPIMHHPPNQIDDLEAQWGVGSSPQRDDLKLLCEQNEEEVSPQLFTFHEAVSQMVEMEEQVVEDHRAVFQESIRWLEDEKALLEMTEEVDYDVDSYATQLEAILEQKIDILTELRDKVKSFRAALQEEEQASKQINPKRPRAL</sequence>
<reference key="1">
    <citation type="submission" date="2005-12" db="EMBL/GenBank/DDBJ databases">
        <authorList>
            <consortium name="NIH - Mammalian Gene Collection (MGC) project"/>
        </authorList>
    </citation>
    <scope>NUCLEOTIDE SEQUENCE [LARGE SCALE MRNA]</scope>
    <source>
        <strain>Crossbred X Angus</strain>
        <tissue>Liver</tissue>
    </source>
</reference>
<organism>
    <name type="scientific">Bos taurus</name>
    <name type="common">Bovine</name>
    <dbReference type="NCBI Taxonomy" id="9913"/>
    <lineage>
        <taxon>Eukaryota</taxon>
        <taxon>Metazoa</taxon>
        <taxon>Chordata</taxon>
        <taxon>Craniata</taxon>
        <taxon>Vertebrata</taxon>
        <taxon>Euteleostomi</taxon>
        <taxon>Mammalia</taxon>
        <taxon>Eutheria</taxon>
        <taxon>Laurasiatheria</taxon>
        <taxon>Artiodactyla</taxon>
        <taxon>Ruminantia</taxon>
        <taxon>Pecora</taxon>
        <taxon>Bovidae</taxon>
        <taxon>Bovinae</taxon>
        <taxon>Bos</taxon>
    </lineage>
</organism>
<evidence type="ECO:0000250" key="1"/>
<evidence type="ECO:0000250" key="2">
    <source>
        <dbReference type="UniProtKB" id="O00139"/>
    </source>
</evidence>
<evidence type="ECO:0000250" key="3">
    <source>
        <dbReference type="UniProtKB" id="P28740"/>
    </source>
</evidence>
<evidence type="ECO:0000255" key="4"/>
<evidence type="ECO:0000255" key="5">
    <source>
        <dbReference type="PROSITE-ProRule" id="PRU00283"/>
    </source>
</evidence>
<evidence type="ECO:0000256" key="6">
    <source>
        <dbReference type="SAM" id="MobiDB-lite"/>
    </source>
</evidence>
<dbReference type="EMBL" id="BC111267">
    <property type="protein sequence ID" value="AAI11268.1"/>
    <property type="molecule type" value="mRNA"/>
</dbReference>
<dbReference type="RefSeq" id="NP_001070541.1">
    <property type="nucleotide sequence ID" value="NM_001077073.1"/>
</dbReference>
<dbReference type="SMR" id="Q2NL05"/>
<dbReference type="FunCoup" id="Q2NL05">
    <property type="interactions" value="889"/>
</dbReference>
<dbReference type="STRING" id="9913.ENSBTAP00000055986"/>
<dbReference type="PaxDb" id="9913-ENSBTAP00000055986"/>
<dbReference type="GeneID" id="768014"/>
<dbReference type="KEGG" id="bta:768014"/>
<dbReference type="CTD" id="3796"/>
<dbReference type="eggNOG" id="KOG0246">
    <property type="taxonomic scope" value="Eukaryota"/>
</dbReference>
<dbReference type="InParanoid" id="Q2NL05"/>
<dbReference type="OrthoDB" id="3176171at2759"/>
<dbReference type="Proteomes" id="UP000009136">
    <property type="component" value="Unplaced"/>
</dbReference>
<dbReference type="GO" id="GO:0005813">
    <property type="term" value="C:centrosome"/>
    <property type="evidence" value="ECO:0000318"/>
    <property type="project" value="GO_Central"/>
</dbReference>
<dbReference type="GO" id="GO:0005737">
    <property type="term" value="C:cytoplasm"/>
    <property type="evidence" value="ECO:0000318"/>
    <property type="project" value="GO_Central"/>
</dbReference>
<dbReference type="GO" id="GO:0005871">
    <property type="term" value="C:kinesin complex"/>
    <property type="evidence" value="ECO:0000318"/>
    <property type="project" value="GO_Central"/>
</dbReference>
<dbReference type="GO" id="GO:0005874">
    <property type="term" value="C:microtubule"/>
    <property type="evidence" value="ECO:0000318"/>
    <property type="project" value="GO_Central"/>
</dbReference>
<dbReference type="GO" id="GO:0005819">
    <property type="term" value="C:spindle"/>
    <property type="evidence" value="ECO:0000318"/>
    <property type="project" value="GO_Central"/>
</dbReference>
<dbReference type="GO" id="GO:0000922">
    <property type="term" value="C:spindle pole"/>
    <property type="evidence" value="ECO:0007669"/>
    <property type="project" value="UniProtKB-SubCell"/>
</dbReference>
<dbReference type="GO" id="GO:0005524">
    <property type="term" value="F:ATP binding"/>
    <property type="evidence" value="ECO:0007669"/>
    <property type="project" value="UniProtKB-KW"/>
</dbReference>
<dbReference type="GO" id="GO:0016887">
    <property type="term" value="F:ATP hydrolysis activity"/>
    <property type="evidence" value="ECO:0000318"/>
    <property type="project" value="GO_Central"/>
</dbReference>
<dbReference type="GO" id="GO:0008017">
    <property type="term" value="F:microtubule binding"/>
    <property type="evidence" value="ECO:0000318"/>
    <property type="project" value="GO_Central"/>
</dbReference>
<dbReference type="GO" id="GO:0003777">
    <property type="term" value="F:microtubule motor activity"/>
    <property type="evidence" value="ECO:0000318"/>
    <property type="project" value="GO_Central"/>
</dbReference>
<dbReference type="GO" id="GO:0030154">
    <property type="term" value="P:cell differentiation"/>
    <property type="evidence" value="ECO:0007669"/>
    <property type="project" value="UniProtKB-KW"/>
</dbReference>
<dbReference type="GO" id="GO:0051301">
    <property type="term" value="P:cell division"/>
    <property type="evidence" value="ECO:0007669"/>
    <property type="project" value="UniProtKB-KW"/>
</dbReference>
<dbReference type="GO" id="GO:0007018">
    <property type="term" value="P:microtubule-based movement"/>
    <property type="evidence" value="ECO:0000318"/>
    <property type="project" value="GO_Central"/>
</dbReference>
<dbReference type="GO" id="GO:0090307">
    <property type="term" value="P:mitotic spindle assembly"/>
    <property type="evidence" value="ECO:0000250"/>
    <property type="project" value="UniProtKB"/>
</dbReference>
<dbReference type="GO" id="GO:0007052">
    <property type="term" value="P:mitotic spindle organization"/>
    <property type="evidence" value="ECO:0000250"/>
    <property type="project" value="UniProtKB"/>
</dbReference>
<dbReference type="GO" id="GO:0007399">
    <property type="term" value="P:nervous system development"/>
    <property type="evidence" value="ECO:0007669"/>
    <property type="project" value="UniProtKB-KW"/>
</dbReference>
<dbReference type="CDD" id="cd01367">
    <property type="entry name" value="KISc_KIF2_like"/>
    <property type="match status" value="1"/>
</dbReference>
<dbReference type="FunFam" id="3.40.850.10:FF:000006">
    <property type="entry name" value="Kinesin-like protein"/>
    <property type="match status" value="1"/>
</dbReference>
<dbReference type="Gene3D" id="3.40.850.10">
    <property type="entry name" value="Kinesin motor domain"/>
    <property type="match status" value="1"/>
</dbReference>
<dbReference type="InterPro" id="IPR054473">
    <property type="entry name" value="KIF2A-like_N"/>
</dbReference>
<dbReference type="InterPro" id="IPR027640">
    <property type="entry name" value="Kinesin-like_fam"/>
</dbReference>
<dbReference type="InterPro" id="IPR019821">
    <property type="entry name" value="Kinesin_motor_CS"/>
</dbReference>
<dbReference type="InterPro" id="IPR001752">
    <property type="entry name" value="Kinesin_motor_dom"/>
</dbReference>
<dbReference type="InterPro" id="IPR036961">
    <property type="entry name" value="Kinesin_motor_dom_sf"/>
</dbReference>
<dbReference type="InterPro" id="IPR027417">
    <property type="entry name" value="P-loop_NTPase"/>
</dbReference>
<dbReference type="PANTHER" id="PTHR47971:SF24">
    <property type="entry name" value="KINESIN-LIKE PROTEIN"/>
    <property type="match status" value="1"/>
</dbReference>
<dbReference type="PANTHER" id="PTHR47971">
    <property type="entry name" value="KINESIN-RELATED PROTEIN 6"/>
    <property type="match status" value="1"/>
</dbReference>
<dbReference type="Pfam" id="PF22923">
    <property type="entry name" value="KIF2A-like_1st"/>
    <property type="match status" value="1"/>
</dbReference>
<dbReference type="Pfam" id="PF00225">
    <property type="entry name" value="Kinesin"/>
    <property type="match status" value="1"/>
</dbReference>
<dbReference type="PRINTS" id="PR00380">
    <property type="entry name" value="KINESINHEAVY"/>
</dbReference>
<dbReference type="SMART" id="SM00129">
    <property type="entry name" value="KISc"/>
    <property type="match status" value="1"/>
</dbReference>
<dbReference type="SUPFAM" id="SSF52540">
    <property type="entry name" value="P-loop containing nucleoside triphosphate hydrolases"/>
    <property type="match status" value="1"/>
</dbReference>
<dbReference type="PROSITE" id="PS00411">
    <property type="entry name" value="KINESIN_MOTOR_1"/>
    <property type="match status" value="1"/>
</dbReference>
<dbReference type="PROSITE" id="PS50067">
    <property type="entry name" value="KINESIN_MOTOR_2"/>
    <property type="match status" value="1"/>
</dbReference>
<keyword id="KW-0007">Acetylation</keyword>
<keyword id="KW-0067">ATP-binding</keyword>
<keyword id="KW-0131">Cell cycle</keyword>
<keyword id="KW-0132">Cell division</keyword>
<keyword id="KW-0175">Coiled coil</keyword>
<keyword id="KW-0963">Cytoplasm</keyword>
<keyword id="KW-0206">Cytoskeleton</keyword>
<keyword id="KW-0217">Developmental protein</keyword>
<keyword id="KW-0221">Differentiation</keyword>
<keyword id="KW-0493">Microtubule</keyword>
<keyword id="KW-0498">Mitosis</keyword>
<keyword id="KW-0505">Motor protein</keyword>
<keyword id="KW-0524">Neurogenesis</keyword>
<keyword id="KW-0547">Nucleotide-binding</keyword>
<keyword id="KW-0597">Phosphoprotein</keyword>
<keyword id="KW-1185">Reference proteome</keyword>
<protein>
    <recommendedName>
        <fullName>Kinesin-like protein KIF2A</fullName>
    </recommendedName>
</protein>
<gene>
    <name type="primary">KIF2A</name>
</gene>
<proteinExistence type="evidence at transcript level"/>
<name>KIF2A_BOVIN</name>
<accession>Q2NL05</accession>
<feature type="chain" id="PRO_0000253714" description="Kinesin-like protein KIF2A">
    <location>
        <begin position="1"/>
        <end position="660"/>
    </location>
</feature>
<feature type="domain" description="Kinesin motor" evidence="5">
    <location>
        <begin position="177"/>
        <end position="507"/>
    </location>
</feature>
<feature type="region of interest" description="Globular" evidence="4">
    <location>
        <begin position="1"/>
        <end position="171"/>
    </location>
</feature>
<feature type="region of interest" description="Disordered" evidence="6">
    <location>
        <begin position="1"/>
        <end position="140"/>
    </location>
</feature>
<feature type="coiled-coil region" evidence="4">
    <location>
        <begin position="614"/>
        <end position="653"/>
    </location>
</feature>
<feature type="compositionally biased region" description="Polar residues" evidence="6">
    <location>
        <begin position="96"/>
        <end position="106"/>
    </location>
</feature>
<feature type="compositionally biased region" description="Basic and acidic residues" evidence="6">
    <location>
        <begin position="113"/>
        <end position="140"/>
    </location>
</feature>
<feature type="binding site" evidence="5">
    <location>
        <begin position="267"/>
        <end position="274"/>
    </location>
    <ligand>
        <name>ATP</name>
        <dbReference type="ChEBI" id="CHEBI:30616"/>
    </ligand>
</feature>
<feature type="modified residue" description="Phosphoserine" evidence="2">
    <location>
        <position position="48"/>
    </location>
</feature>
<feature type="modified residue" description="Phosphothreonine" evidence="2">
    <location>
        <position position="51"/>
    </location>
</feature>
<feature type="modified residue" description="Phosphothreonine" evidence="2">
    <location>
        <position position="70"/>
    </location>
</feature>
<feature type="modified residue" description="Phosphoserine" evidence="2">
    <location>
        <position position="73"/>
    </location>
</feature>
<feature type="modified residue" description="N6-acetyllysine" evidence="3">
    <location>
        <position position="75"/>
    </location>
</feature>
<comment type="function">
    <text evidence="2">Plus end-directed microtubule-dependent motor required for normal brain development. May regulate microtubule dynamics during axonal growth. Required for normal progression through mitosis. Required for normal congress of chromosomes at the metaphase plate. Required for normal spindle dynamics during mitosis. Promotes spindle turnover. Implicated in formation of bipolar mitotic spindles. Has microtubule depolymerization activity (By similarity).</text>
</comment>
<comment type="subunit">
    <text evidence="2">Interacts with AURKA and PLK1. Interacts with PSRC1. Interacts with MCRS1; the interaction enhances recruitment of KIF2A to the minus ends of spindle microtubules which promotes chromosome alignment.</text>
</comment>
<comment type="subcellular location">
    <subcellularLocation>
        <location evidence="1">Cytoplasm</location>
    </subcellularLocation>
    <subcellularLocation>
        <location evidence="1">Cytoplasm</location>
        <location evidence="1">Cytoskeleton</location>
        <location evidence="1">Microtubule organizing center</location>
        <location evidence="1">Centrosome</location>
    </subcellularLocation>
    <subcellularLocation>
        <location evidence="1">Cytoplasm</location>
        <location evidence="1">Cytoskeleton</location>
        <location evidence="1">Spindle pole</location>
    </subcellularLocation>
    <subcellularLocation>
        <location evidence="1">Cytoplasm</location>
        <location evidence="1">Cytoskeleton</location>
        <location evidence="1">Spindle</location>
    </subcellularLocation>
    <text evidence="1">Localized to the spindle microtubules and spindle poles from prophase to metaphase. Efficient targeting to spindle microtubules and spindle poles requires the kinase activity of PLK1. Recruited to mitotic spindles by interaction with PSRC1 (By similarity).</text>
</comment>
<comment type="similarity">
    <text evidence="5">Belongs to the TRAFAC class myosin-kinesin ATPase superfamily. Kinesin family. MCAK/KIF2 subfamily.</text>
</comment>